<gene>
    <name evidence="1" type="primary">yidE</name>
    <name type="ordered locus">SeHA_C4138</name>
</gene>
<comment type="subcellular location">
    <subcellularLocation>
        <location evidence="1">Cell membrane</location>
        <topology evidence="1">Multi-pass membrane protein</topology>
    </subcellularLocation>
</comment>
<comment type="similarity">
    <text evidence="1">Belongs to the AAE transporter (TC 2.A.81) family. YidE subfamily.</text>
</comment>
<evidence type="ECO:0000255" key="1">
    <source>
        <dbReference type="HAMAP-Rule" id="MF_01016"/>
    </source>
</evidence>
<accession>B4TA59</accession>
<keyword id="KW-1003">Cell membrane</keyword>
<keyword id="KW-0472">Membrane</keyword>
<keyword id="KW-0677">Repeat</keyword>
<keyword id="KW-0812">Transmembrane</keyword>
<keyword id="KW-1133">Transmembrane helix</keyword>
<keyword id="KW-0813">Transport</keyword>
<feature type="chain" id="PRO_1000135216" description="Putative transport protein YidE">
    <location>
        <begin position="1"/>
        <end position="553"/>
    </location>
</feature>
<feature type="transmembrane region" description="Helical" evidence="1">
    <location>
        <begin position="4"/>
        <end position="24"/>
    </location>
</feature>
<feature type="transmembrane region" description="Helical" evidence="1">
    <location>
        <begin position="28"/>
        <end position="48"/>
    </location>
</feature>
<feature type="transmembrane region" description="Helical" evidence="1">
    <location>
        <begin position="65"/>
        <end position="85"/>
    </location>
</feature>
<feature type="transmembrane region" description="Helical" evidence="1">
    <location>
        <begin position="95"/>
        <end position="115"/>
    </location>
</feature>
<feature type="transmembrane region" description="Helical" evidence="1">
    <location>
        <begin position="158"/>
        <end position="178"/>
    </location>
</feature>
<feature type="transmembrane region" description="Helical" evidence="1">
    <location>
        <begin position="371"/>
        <end position="391"/>
    </location>
</feature>
<feature type="transmembrane region" description="Helical" evidence="1">
    <location>
        <begin position="393"/>
        <end position="413"/>
    </location>
</feature>
<feature type="transmembrane region" description="Helical" evidence="1">
    <location>
        <begin position="437"/>
        <end position="457"/>
    </location>
</feature>
<feature type="transmembrane region" description="Helical" evidence="1">
    <location>
        <begin position="464"/>
        <end position="484"/>
    </location>
</feature>
<feature type="transmembrane region" description="Helical" evidence="1">
    <location>
        <begin position="493"/>
        <end position="513"/>
    </location>
</feature>
<feature type="transmembrane region" description="Helical" evidence="1">
    <location>
        <begin position="533"/>
        <end position="553"/>
    </location>
</feature>
<feature type="domain" description="RCK C-terminal 1" evidence="1">
    <location>
        <begin position="192"/>
        <end position="276"/>
    </location>
</feature>
<feature type="domain" description="RCK C-terminal 2" evidence="1">
    <location>
        <begin position="279"/>
        <end position="361"/>
    </location>
</feature>
<name>YIDE_SALHS</name>
<protein>
    <recommendedName>
        <fullName evidence="1">Putative transport protein YidE</fullName>
    </recommendedName>
</protein>
<reference key="1">
    <citation type="journal article" date="2011" name="J. Bacteriol.">
        <title>Comparative genomics of 28 Salmonella enterica isolates: evidence for CRISPR-mediated adaptive sublineage evolution.</title>
        <authorList>
            <person name="Fricke W.F."/>
            <person name="Mammel M.K."/>
            <person name="McDermott P.F."/>
            <person name="Tartera C."/>
            <person name="White D.G."/>
            <person name="Leclerc J.E."/>
            <person name="Ravel J."/>
            <person name="Cebula T.A."/>
        </authorList>
    </citation>
    <scope>NUCLEOTIDE SEQUENCE [LARGE SCALE GENOMIC DNA]</scope>
    <source>
        <strain>SL476</strain>
    </source>
</reference>
<dbReference type="EMBL" id="CP001120">
    <property type="protein sequence ID" value="ACF68024.1"/>
    <property type="molecule type" value="Genomic_DNA"/>
</dbReference>
<dbReference type="RefSeq" id="WP_001279787.1">
    <property type="nucleotide sequence ID" value="NC_011083.1"/>
</dbReference>
<dbReference type="SMR" id="B4TA59"/>
<dbReference type="KEGG" id="seh:SeHA_C4138"/>
<dbReference type="HOGENOM" id="CLU_035023_3_1_6"/>
<dbReference type="Proteomes" id="UP000001866">
    <property type="component" value="Chromosome"/>
</dbReference>
<dbReference type="GO" id="GO:0005886">
    <property type="term" value="C:plasma membrane"/>
    <property type="evidence" value="ECO:0007669"/>
    <property type="project" value="UniProtKB-SubCell"/>
</dbReference>
<dbReference type="GO" id="GO:0008324">
    <property type="term" value="F:monoatomic cation transmembrane transporter activity"/>
    <property type="evidence" value="ECO:0007669"/>
    <property type="project" value="InterPro"/>
</dbReference>
<dbReference type="GO" id="GO:0006813">
    <property type="term" value="P:potassium ion transport"/>
    <property type="evidence" value="ECO:0007669"/>
    <property type="project" value="InterPro"/>
</dbReference>
<dbReference type="FunFam" id="3.30.70.1450:FF:000004">
    <property type="entry name" value="Putative transport protein YidE"/>
    <property type="match status" value="1"/>
</dbReference>
<dbReference type="Gene3D" id="3.30.70.1450">
    <property type="entry name" value="Regulator of K+ conductance, C-terminal domain"/>
    <property type="match status" value="2"/>
</dbReference>
<dbReference type="HAMAP" id="MF_01016">
    <property type="entry name" value="YidE"/>
    <property type="match status" value="1"/>
</dbReference>
<dbReference type="InterPro" id="IPR050144">
    <property type="entry name" value="AAE_transporter"/>
</dbReference>
<dbReference type="InterPro" id="IPR006037">
    <property type="entry name" value="RCK_C"/>
</dbReference>
<dbReference type="InterPro" id="IPR036721">
    <property type="entry name" value="RCK_C_sf"/>
</dbReference>
<dbReference type="InterPro" id="IPR023018">
    <property type="entry name" value="Transpt_YidE_put"/>
</dbReference>
<dbReference type="InterPro" id="IPR006512">
    <property type="entry name" value="YidE_YbjL"/>
</dbReference>
<dbReference type="NCBIfam" id="NF003007">
    <property type="entry name" value="PRK03818.1"/>
    <property type="match status" value="1"/>
</dbReference>
<dbReference type="NCBIfam" id="TIGR01625">
    <property type="entry name" value="YidE_YbjL_dupl"/>
    <property type="match status" value="2"/>
</dbReference>
<dbReference type="PANTHER" id="PTHR30445">
    <property type="entry name" value="K(+)_H(+) ANTIPORTER SUBUNIT KHTT"/>
    <property type="match status" value="1"/>
</dbReference>
<dbReference type="PANTHER" id="PTHR30445:SF3">
    <property type="entry name" value="TRANSPORT PROTEIN YIDE-RELATED"/>
    <property type="match status" value="1"/>
</dbReference>
<dbReference type="Pfam" id="PF06826">
    <property type="entry name" value="Asp-Al_Ex"/>
    <property type="match status" value="2"/>
</dbReference>
<dbReference type="Pfam" id="PF02080">
    <property type="entry name" value="TrkA_C"/>
    <property type="match status" value="2"/>
</dbReference>
<dbReference type="SUPFAM" id="SSF116726">
    <property type="entry name" value="TrkA C-terminal domain-like"/>
    <property type="match status" value="2"/>
</dbReference>
<dbReference type="PROSITE" id="PS51202">
    <property type="entry name" value="RCK_C"/>
    <property type="match status" value="2"/>
</dbReference>
<sequence length="553" mass="58903">MSDIALTVSVLALVAVVGLWIGNIKVRGVGFGIGGVLFGGIIVGHFVDQAGVTLSGDMLHFIQEFGLILFVYTIGIQVGPGFFASLRVSGLRLNLFAVLIVIMGGLVTAILHKIFAIPLPVVLGIFSGAVTNTPALGAGQQILRDLGTPVDLVDQMGMSYAMAYPFGICGILLTMWLMRLIFRVNVEAEAQKHESSLANGHSLIQTMNIRVENPNLNNMAIQDVPILNSDKIICSRLKRDDTLMVPSPGTIIQAGDLLHLVGQPTDLHNAQLVIGKEVDTSLSTRGTDLRVERVVVTNEKVLGKRIRDLHFKERYDVVISRLNRAGVELVASSDASLQFGDILNLVGRPASIDAVANVVGNAQQKLQQVQMLPVFIGIGLGVLLGSIPLFVPGFPVALKLGLAGGPLIMALILGRIGSIGKLYWFMPPSANLALRELGIVLFLAVVGLKSGGDFVDTLTQGEGLSWIGYGIFITAIPLITVGLLARIFAKMNYLTLCGMLAGSMTDPPALAFANNLHATSGAAALSYATVYPLVMFLRIITPQLLAVIFWGMG</sequence>
<proteinExistence type="inferred from homology"/>
<organism>
    <name type="scientific">Salmonella heidelberg (strain SL476)</name>
    <dbReference type="NCBI Taxonomy" id="454169"/>
    <lineage>
        <taxon>Bacteria</taxon>
        <taxon>Pseudomonadati</taxon>
        <taxon>Pseudomonadota</taxon>
        <taxon>Gammaproteobacteria</taxon>
        <taxon>Enterobacterales</taxon>
        <taxon>Enterobacteriaceae</taxon>
        <taxon>Salmonella</taxon>
    </lineage>
</organism>